<gene>
    <name evidence="7" type="primary">GILT2</name>
    <name evidence="7" type="ORF">CG10157</name>
</gene>
<name>GILT2_DROME</name>
<dbReference type="EC" id="1.8.-.-" evidence="1"/>
<dbReference type="EMBL" id="AE014297">
    <property type="protein sequence ID" value="AAF56157.1"/>
    <property type="molecule type" value="Genomic_DNA"/>
</dbReference>
<dbReference type="EMBL" id="AY095188">
    <property type="protein sequence ID" value="AAM12281.1"/>
    <property type="molecule type" value="mRNA"/>
</dbReference>
<dbReference type="RefSeq" id="NP_651166.1">
    <property type="nucleotide sequence ID" value="NM_142909.4"/>
</dbReference>
<dbReference type="SMR" id="Q9VCK1"/>
<dbReference type="IntAct" id="Q9VCK1">
    <property type="interactions" value="3"/>
</dbReference>
<dbReference type="STRING" id="7227.FBpp0083827"/>
<dbReference type="GlyCosmos" id="Q9VCK1">
    <property type="glycosylation" value="1 site, No reported glycans"/>
</dbReference>
<dbReference type="GlyGen" id="Q9VCK1">
    <property type="glycosylation" value="1 site"/>
</dbReference>
<dbReference type="PaxDb" id="7227-FBpp0083827"/>
<dbReference type="DNASU" id="42788"/>
<dbReference type="EnsemblMetazoa" id="FBtr0084435">
    <property type="protein sequence ID" value="FBpp0083827"/>
    <property type="gene ID" value="FBgn0039099"/>
</dbReference>
<dbReference type="GeneID" id="42788"/>
<dbReference type="KEGG" id="dme:Dmel_CG10157"/>
<dbReference type="UCSC" id="CG10157-RA">
    <property type="organism name" value="d. melanogaster"/>
</dbReference>
<dbReference type="AGR" id="FB:FBgn0039099"/>
<dbReference type="CTD" id="42788"/>
<dbReference type="FlyBase" id="FBgn0039099">
    <property type="gene designation" value="GILT2"/>
</dbReference>
<dbReference type="VEuPathDB" id="VectorBase:FBgn0039099"/>
<dbReference type="eggNOG" id="KOG3160">
    <property type="taxonomic scope" value="Eukaryota"/>
</dbReference>
<dbReference type="GeneTree" id="ENSGT00940000173058"/>
<dbReference type="HOGENOM" id="CLU_066886_2_2_1"/>
<dbReference type="InParanoid" id="Q9VCK1"/>
<dbReference type="OMA" id="FCAKYKE"/>
<dbReference type="OrthoDB" id="958254at2759"/>
<dbReference type="PhylomeDB" id="Q9VCK1"/>
<dbReference type="SignaLink" id="Q9VCK1"/>
<dbReference type="BioGRID-ORCS" id="42788">
    <property type="hits" value="0 hits in 1 CRISPR screen"/>
</dbReference>
<dbReference type="GenomeRNAi" id="42788"/>
<dbReference type="PRO" id="PR:Q9VCK1"/>
<dbReference type="Proteomes" id="UP000000803">
    <property type="component" value="Chromosome 3R"/>
</dbReference>
<dbReference type="Bgee" id="FBgn0039099">
    <property type="expression patterns" value="Expressed in seminal fluid secreting gland and 97 other cell types or tissues"/>
</dbReference>
<dbReference type="GO" id="GO:0005576">
    <property type="term" value="C:extracellular region"/>
    <property type="evidence" value="ECO:0007669"/>
    <property type="project" value="UniProtKB-SubCell"/>
</dbReference>
<dbReference type="GO" id="GO:0016491">
    <property type="term" value="F:oxidoreductase activity"/>
    <property type="evidence" value="ECO:0000318"/>
    <property type="project" value="GO_Central"/>
</dbReference>
<dbReference type="GO" id="GO:0016667">
    <property type="term" value="F:oxidoreductase activity, acting on a sulfur group of donors"/>
    <property type="evidence" value="ECO:0000250"/>
    <property type="project" value="FlyBase"/>
</dbReference>
<dbReference type="GO" id="GO:0016671">
    <property type="term" value="F:oxidoreductase activity, acting on a sulfur group of donors, disulfide as acceptor"/>
    <property type="evidence" value="ECO:0007669"/>
    <property type="project" value="InterPro"/>
</dbReference>
<dbReference type="GO" id="GO:0002376">
    <property type="term" value="P:immune system process"/>
    <property type="evidence" value="ECO:0007669"/>
    <property type="project" value="UniProtKB-KW"/>
</dbReference>
<dbReference type="GO" id="GO:1900426">
    <property type="term" value="P:positive regulation of defense response to bacterium"/>
    <property type="evidence" value="ECO:0000315"/>
    <property type="project" value="FlyBase"/>
</dbReference>
<dbReference type="FunFam" id="3.40.30.10:FF:000655">
    <property type="entry name" value="GM26512"/>
    <property type="match status" value="1"/>
</dbReference>
<dbReference type="Gene3D" id="3.40.30.10">
    <property type="entry name" value="Glutaredoxin"/>
    <property type="match status" value="1"/>
</dbReference>
<dbReference type="InterPro" id="IPR004911">
    <property type="entry name" value="Interferon-induced_GILT"/>
</dbReference>
<dbReference type="InterPro" id="IPR036249">
    <property type="entry name" value="Thioredoxin-like_sf"/>
</dbReference>
<dbReference type="PANTHER" id="PTHR13234">
    <property type="entry name" value="GAMMA-INTERFERON INDUCIBLE LYSOSOMAL THIOL REDUCTASE GILT"/>
    <property type="match status" value="1"/>
</dbReference>
<dbReference type="PANTHER" id="PTHR13234:SF73">
    <property type="entry name" value="GILT-LIKE PROTEIN 2-RELATED"/>
    <property type="match status" value="1"/>
</dbReference>
<dbReference type="Pfam" id="PF03227">
    <property type="entry name" value="GILT"/>
    <property type="match status" value="1"/>
</dbReference>
<dbReference type="SUPFAM" id="SSF52833">
    <property type="entry name" value="Thioredoxin-like"/>
    <property type="match status" value="1"/>
</dbReference>
<keyword id="KW-1015">Disulfide bond</keyword>
<keyword id="KW-0325">Glycoprotein</keyword>
<keyword id="KW-0391">Immunity</keyword>
<keyword id="KW-0560">Oxidoreductase</keyword>
<keyword id="KW-0676">Redox-active center</keyword>
<keyword id="KW-1185">Reference proteome</keyword>
<keyword id="KW-0964">Secreted</keyword>
<keyword id="KW-0732">Signal</keyword>
<feature type="signal peptide" evidence="2">
    <location>
        <begin position="1"/>
        <end position="19"/>
    </location>
</feature>
<feature type="chain" id="PRO_5008180644" description="GILT-like protein 2" evidence="2">
    <location>
        <begin position="20"/>
        <end position="207"/>
    </location>
</feature>
<feature type="glycosylation site" description="N-linked (GlcNAc...) asparagine" evidence="3">
    <location>
        <position position="182"/>
    </location>
</feature>
<feature type="disulfide bond" description="Redox-active" evidence="1">
    <location>
        <begin position="40"/>
        <end position="43"/>
    </location>
</feature>
<protein>
    <recommendedName>
        <fullName evidence="5">GILT-like protein 2</fullName>
        <ecNumber evidence="1">1.8.-.-</ecNumber>
    </recommendedName>
</protein>
<sequence>MRAAVFVCLLLGWVGVATPRRLRGPQADRLAITLYYEALCPYCMEFVTTQLNPSMVRQDRLPFTDLTLVPYGNARTNDDGNVECQHGVMECELNAWHACILEHHDIAQSLKLIACMMRGKKNRLEKCADHYQIDVGDVKNCKKTRQVNDILRKYGKETAKVSFQGVPAVALDNVYNADLSANLTDHFDAIFCAKYKEKFNKQLNNCQ</sequence>
<reference evidence="8" key="1">
    <citation type="journal article" date="2000" name="Science">
        <title>The genome sequence of Drosophila melanogaster.</title>
        <authorList>
            <person name="Adams M.D."/>
            <person name="Celniker S.E."/>
            <person name="Holt R.A."/>
            <person name="Evans C.A."/>
            <person name="Gocayne J.D."/>
            <person name="Amanatides P.G."/>
            <person name="Scherer S.E."/>
            <person name="Li P.W."/>
            <person name="Hoskins R.A."/>
            <person name="Galle R.F."/>
            <person name="George R.A."/>
            <person name="Lewis S.E."/>
            <person name="Richards S."/>
            <person name="Ashburner M."/>
            <person name="Henderson S.N."/>
            <person name="Sutton G.G."/>
            <person name="Wortman J.R."/>
            <person name="Yandell M.D."/>
            <person name="Zhang Q."/>
            <person name="Chen L.X."/>
            <person name="Brandon R.C."/>
            <person name="Rogers Y.-H.C."/>
            <person name="Blazej R.G."/>
            <person name="Champe M."/>
            <person name="Pfeiffer B.D."/>
            <person name="Wan K.H."/>
            <person name="Doyle C."/>
            <person name="Baxter E.G."/>
            <person name="Helt G."/>
            <person name="Nelson C.R."/>
            <person name="Miklos G.L.G."/>
            <person name="Abril J.F."/>
            <person name="Agbayani A."/>
            <person name="An H.-J."/>
            <person name="Andrews-Pfannkoch C."/>
            <person name="Baldwin D."/>
            <person name="Ballew R.M."/>
            <person name="Basu A."/>
            <person name="Baxendale J."/>
            <person name="Bayraktaroglu L."/>
            <person name="Beasley E.M."/>
            <person name="Beeson K.Y."/>
            <person name="Benos P.V."/>
            <person name="Berman B.P."/>
            <person name="Bhandari D."/>
            <person name="Bolshakov S."/>
            <person name="Borkova D."/>
            <person name="Botchan M.R."/>
            <person name="Bouck J."/>
            <person name="Brokstein P."/>
            <person name="Brottier P."/>
            <person name="Burtis K.C."/>
            <person name="Busam D.A."/>
            <person name="Butler H."/>
            <person name="Cadieu E."/>
            <person name="Center A."/>
            <person name="Chandra I."/>
            <person name="Cherry J.M."/>
            <person name="Cawley S."/>
            <person name="Dahlke C."/>
            <person name="Davenport L.B."/>
            <person name="Davies P."/>
            <person name="de Pablos B."/>
            <person name="Delcher A."/>
            <person name="Deng Z."/>
            <person name="Mays A.D."/>
            <person name="Dew I."/>
            <person name="Dietz S.M."/>
            <person name="Dodson K."/>
            <person name="Doup L.E."/>
            <person name="Downes M."/>
            <person name="Dugan-Rocha S."/>
            <person name="Dunkov B.C."/>
            <person name="Dunn P."/>
            <person name="Durbin K.J."/>
            <person name="Evangelista C.C."/>
            <person name="Ferraz C."/>
            <person name="Ferriera S."/>
            <person name="Fleischmann W."/>
            <person name="Fosler C."/>
            <person name="Gabrielian A.E."/>
            <person name="Garg N.S."/>
            <person name="Gelbart W.M."/>
            <person name="Glasser K."/>
            <person name="Glodek A."/>
            <person name="Gong F."/>
            <person name="Gorrell J.H."/>
            <person name="Gu Z."/>
            <person name="Guan P."/>
            <person name="Harris M."/>
            <person name="Harris N.L."/>
            <person name="Harvey D.A."/>
            <person name="Heiman T.J."/>
            <person name="Hernandez J.R."/>
            <person name="Houck J."/>
            <person name="Hostin D."/>
            <person name="Houston K.A."/>
            <person name="Howland T.J."/>
            <person name="Wei M.-H."/>
            <person name="Ibegwam C."/>
            <person name="Jalali M."/>
            <person name="Kalush F."/>
            <person name="Karpen G.H."/>
            <person name="Ke Z."/>
            <person name="Kennison J.A."/>
            <person name="Ketchum K.A."/>
            <person name="Kimmel B.E."/>
            <person name="Kodira C.D."/>
            <person name="Kraft C.L."/>
            <person name="Kravitz S."/>
            <person name="Kulp D."/>
            <person name="Lai Z."/>
            <person name="Lasko P."/>
            <person name="Lei Y."/>
            <person name="Levitsky A.A."/>
            <person name="Li J.H."/>
            <person name="Li Z."/>
            <person name="Liang Y."/>
            <person name="Lin X."/>
            <person name="Liu X."/>
            <person name="Mattei B."/>
            <person name="McIntosh T.C."/>
            <person name="McLeod M.P."/>
            <person name="McPherson D."/>
            <person name="Merkulov G."/>
            <person name="Milshina N.V."/>
            <person name="Mobarry C."/>
            <person name="Morris J."/>
            <person name="Moshrefi A."/>
            <person name="Mount S.M."/>
            <person name="Moy M."/>
            <person name="Murphy B."/>
            <person name="Murphy L."/>
            <person name="Muzny D.M."/>
            <person name="Nelson D.L."/>
            <person name="Nelson D.R."/>
            <person name="Nelson K.A."/>
            <person name="Nixon K."/>
            <person name="Nusskern D.R."/>
            <person name="Pacleb J.M."/>
            <person name="Palazzolo M."/>
            <person name="Pittman G.S."/>
            <person name="Pan S."/>
            <person name="Pollard J."/>
            <person name="Puri V."/>
            <person name="Reese M.G."/>
            <person name="Reinert K."/>
            <person name="Remington K."/>
            <person name="Saunders R.D.C."/>
            <person name="Scheeler F."/>
            <person name="Shen H."/>
            <person name="Shue B.C."/>
            <person name="Siden-Kiamos I."/>
            <person name="Simpson M."/>
            <person name="Skupski M.P."/>
            <person name="Smith T.J."/>
            <person name="Spier E."/>
            <person name="Spradling A.C."/>
            <person name="Stapleton M."/>
            <person name="Strong R."/>
            <person name="Sun E."/>
            <person name="Svirskas R."/>
            <person name="Tector C."/>
            <person name="Turner R."/>
            <person name="Venter E."/>
            <person name="Wang A.H."/>
            <person name="Wang X."/>
            <person name="Wang Z.-Y."/>
            <person name="Wassarman D.A."/>
            <person name="Weinstock G.M."/>
            <person name="Weissenbach J."/>
            <person name="Williams S.M."/>
            <person name="Woodage T."/>
            <person name="Worley K.C."/>
            <person name="Wu D."/>
            <person name="Yang S."/>
            <person name="Yao Q.A."/>
            <person name="Ye J."/>
            <person name="Yeh R.-F."/>
            <person name="Zaveri J.S."/>
            <person name="Zhan M."/>
            <person name="Zhang G."/>
            <person name="Zhao Q."/>
            <person name="Zheng L."/>
            <person name="Zheng X.H."/>
            <person name="Zhong F.N."/>
            <person name="Zhong W."/>
            <person name="Zhou X."/>
            <person name="Zhu S.C."/>
            <person name="Zhu X."/>
            <person name="Smith H.O."/>
            <person name="Gibbs R.A."/>
            <person name="Myers E.W."/>
            <person name="Rubin G.M."/>
            <person name="Venter J.C."/>
        </authorList>
    </citation>
    <scope>NUCLEOTIDE SEQUENCE [LARGE SCALE GENOMIC DNA]</scope>
    <source>
        <strain evidence="8">Berkeley</strain>
    </source>
</reference>
<reference evidence="8" key="2">
    <citation type="journal article" date="2002" name="Genome Biol.">
        <title>Annotation of the Drosophila melanogaster euchromatic genome: a systematic review.</title>
        <authorList>
            <person name="Misra S."/>
            <person name="Crosby M.A."/>
            <person name="Mungall C.J."/>
            <person name="Matthews B.B."/>
            <person name="Campbell K.S."/>
            <person name="Hradecky P."/>
            <person name="Huang Y."/>
            <person name="Kaminker J.S."/>
            <person name="Millburn G.H."/>
            <person name="Prochnik S.E."/>
            <person name="Smith C.D."/>
            <person name="Tupy J.L."/>
            <person name="Whitfield E.J."/>
            <person name="Bayraktaroglu L."/>
            <person name="Berman B.P."/>
            <person name="Bettencourt B.R."/>
            <person name="Celniker S.E."/>
            <person name="de Grey A.D.N.J."/>
            <person name="Drysdale R.A."/>
            <person name="Harris N.L."/>
            <person name="Richter J."/>
            <person name="Russo S."/>
            <person name="Schroeder A.J."/>
            <person name="Shu S.Q."/>
            <person name="Stapleton M."/>
            <person name="Yamada C."/>
            <person name="Ashburner M."/>
            <person name="Gelbart W.M."/>
            <person name="Rubin G.M."/>
            <person name="Lewis S.E."/>
        </authorList>
    </citation>
    <scope>GENOME REANNOTATION</scope>
    <source>
        <strain evidence="8">Berkeley</strain>
    </source>
</reference>
<reference evidence="6" key="3">
    <citation type="journal article" date="2002" name="Genome Biol.">
        <title>A Drosophila full-length cDNA resource.</title>
        <authorList>
            <person name="Stapleton M."/>
            <person name="Carlson J.W."/>
            <person name="Brokstein P."/>
            <person name="Yu C."/>
            <person name="Champe M."/>
            <person name="George R.A."/>
            <person name="Guarin H."/>
            <person name="Kronmiller B."/>
            <person name="Pacleb J.M."/>
            <person name="Park S."/>
            <person name="Wan K.H."/>
            <person name="Rubin G.M."/>
            <person name="Celniker S.E."/>
        </authorList>
    </citation>
    <scope>NUCLEOTIDE SEQUENCE [LARGE SCALE MRNA]</scope>
    <source>
        <strain evidence="6">Berkeley</strain>
        <tissue evidence="6">Embryo</tissue>
    </source>
</reference>
<reference evidence="5" key="4">
    <citation type="journal article" date="2014" name="Dev. Comp. Immunol.">
        <title>Identification of gamma-interferon-inducible lysosomal thiol reductase (GILT) homologues in the fruit fly Drosophila melanogaster.</title>
        <authorList>
            <person name="Kongton K."/>
            <person name="McCall K."/>
            <person name="Phongdara A."/>
        </authorList>
    </citation>
    <scope>FUNCTION</scope>
    <scope>INDUCTION</scope>
    <scope>DISRUPTION PHENOTYPE</scope>
</reference>
<evidence type="ECO:0000250" key="1">
    <source>
        <dbReference type="UniProtKB" id="P13284"/>
    </source>
</evidence>
<evidence type="ECO:0000255" key="2"/>
<evidence type="ECO:0000255" key="3">
    <source>
        <dbReference type="PROSITE-ProRule" id="PRU00498"/>
    </source>
</evidence>
<evidence type="ECO:0000269" key="4">
    <source>
    </source>
</evidence>
<evidence type="ECO:0000305" key="5"/>
<evidence type="ECO:0000312" key="6">
    <source>
        <dbReference type="EMBL" id="AAM12281.1"/>
    </source>
</evidence>
<evidence type="ECO:0000312" key="7">
    <source>
        <dbReference type="FlyBase" id="FBgn0039099"/>
    </source>
</evidence>
<evidence type="ECO:0000312" key="8">
    <source>
        <dbReference type="Proteomes" id="UP000000803"/>
    </source>
</evidence>
<proteinExistence type="evidence at transcript level"/>
<organism evidence="8">
    <name type="scientific">Drosophila melanogaster</name>
    <name type="common">Fruit fly</name>
    <dbReference type="NCBI Taxonomy" id="7227"/>
    <lineage>
        <taxon>Eukaryota</taxon>
        <taxon>Metazoa</taxon>
        <taxon>Ecdysozoa</taxon>
        <taxon>Arthropoda</taxon>
        <taxon>Hexapoda</taxon>
        <taxon>Insecta</taxon>
        <taxon>Pterygota</taxon>
        <taxon>Neoptera</taxon>
        <taxon>Endopterygota</taxon>
        <taxon>Diptera</taxon>
        <taxon>Brachycera</taxon>
        <taxon>Muscomorpha</taxon>
        <taxon>Ephydroidea</taxon>
        <taxon>Drosophilidae</taxon>
        <taxon>Drosophila</taxon>
        <taxon>Sophophora</taxon>
    </lineage>
</organism>
<comment type="function">
    <text evidence="1 4">Probable lysosomal thiol reductase that can reduce protein disulfide bonds (By similarity). Involved in the immune response to bacterial infection (PubMed:24491521).</text>
</comment>
<comment type="subcellular location">
    <subcellularLocation>
        <location evidence="5">Secreted</location>
    </subcellularLocation>
</comment>
<comment type="induction">
    <text evidence="4">Up-regulated following injection with the Gram-negative bacterium E.coli. Up-regulation increases between 1 and 12 hours after the injection, then decreases between 12 and 48 hours, and then increases again at 72 hours.</text>
</comment>
<comment type="disruption phenotype">
    <text evidence="4">RNAi-mediated knockdown in the fat body or hemocyte of flies infected with the Gram-negative bacterium E.coli results in an increase in bacterial load 24 hours after infection.</text>
</comment>
<comment type="similarity">
    <text evidence="5">Belongs to the GILT family.</text>
</comment>
<accession>Q9VCK1</accession>